<protein>
    <recommendedName>
        <fullName>EPS I polysaccharide export outer membrane protein EpsA</fullName>
    </recommendedName>
</protein>
<keyword id="KW-0998">Cell outer membrane</keyword>
<keyword id="KW-0406">Ion transport</keyword>
<keyword id="KW-0449">Lipoprotein</keyword>
<keyword id="KW-0472">Membrane</keyword>
<keyword id="KW-0564">Palmitate</keyword>
<keyword id="KW-0625">Polysaccharide transport</keyword>
<keyword id="KW-0626">Porin</keyword>
<keyword id="KW-0732">Signal</keyword>
<keyword id="KW-0762">Sugar transport</keyword>
<keyword id="KW-0812">Transmembrane</keyword>
<keyword id="KW-1134">Transmembrane beta strand</keyword>
<keyword id="KW-0813">Transport</keyword>
<keyword id="KW-0843">Virulence</keyword>
<organism>
    <name type="scientific">Ralstonia solanacearum</name>
    <name type="common">Pseudomonas solanacearum</name>
    <dbReference type="NCBI Taxonomy" id="305"/>
    <lineage>
        <taxon>Bacteria</taxon>
        <taxon>Pseudomonadati</taxon>
        <taxon>Pseudomonadota</taxon>
        <taxon>Betaproteobacteria</taxon>
        <taxon>Burkholderiales</taxon>
        <taxon>Burkholderiaceae</taxon>
        <taxon>Ralstonia</taxon>
        <taxon>Ralstonia solanacearum species complex</taxon>
    </lineage>
</organism>
<dbReference type="EMBL" id="U17898">
    <property type="protein sequence ID" value="AAA91624.1"/>
    <property type="molecule type" value="Genomic_DNA"/>
</dbReference>
<dbReference type="PIR" id="S77634">
    <property type="entry name" value="S77634"/>
</dbReference>
<dbReference type="SMR" id="Q45407"/>
<dbReference type="TCDB" id="1.B.18.3.2">
    <property type="family name" value="the outer membrane auxiliary (oma) protein family"/>
</dbReference>
<dbReference type="GO" id="GO:0009279">
    <property type="term" value="C:cell outer membrane"/>
    <property type="evidence" value="ECO:0007669"/>
    <property type="project" value="UniProtKB-SubCell"/>
</dbReference>
<dbReference type="GO" id="GO:0046930">
    <property type="term" value="C:pore complex"/>
    <property type="evidence" value="ECO:0007669"/>
    <property type="project" value="UniProtKB-KW"/>
</dbReference>
<dbReference type="GO" id="GO:0015159">
    <property type="term" value="F:polysaccharide transmembrane transporter activity"/>
    <property type="evidence" value="ECO:0007669"/>
    <property type="project" value="InterPro"/>
</dbReference>
<dbReference type="GO" id="GO:0015288">
    <property type="term" value="F:porin activity"/>
    <property type="evidence" value="ECO:0007669"/>
    <property type="project" value="UniProtKB-KW"/>
</dbReference>
<dbReference type="GO" id="GO:0006811">
    <property type="term" value="P:monoatomic ion transport"/>
    <property type="evidence" value="ECO:0007669"/>
    <property type="project" value="UniProtKB-KW"/>
</dbReference>
<dbReference type="Gene3D" id="3.10.560.10">
    <property type="entry name" value="Outer membrane lipoprotein wza domain like"/>
    <property type="match status" value="2"/>
</dbReference>
<dbReference type="Gene3D" id="3.30.1950.10">
    <property type="entry name" value="wza like domain"/>
    <property type="match status" value="1"/>
</dbReference>
<dbReference type="InterPro" id="IPR049712">
    <property type="entry name" value="Poly_export"/>
</dbReference>
<dbReference type="InterPro" id="IPR003715">
    <property type="entry name" value="Poly_export_N"/>
</dbReference>
<dbReference type="InterPro" id="IPR054765">
    <property type="entry name" value="SLBB_dom"/>
</dbReference>
<dbReference type="PANTHER" id="PTHR33619">
    <property type="entry name" value="POLYSACCHARIDE EXPORT PROTEIN GFCE-RELATED"/>
    <property type="match status" value="1"/>
</dbReference>
<dbReference type="PANTHER" id="PTHR33619:SF3">
    <property type="entry name" value="POLYSACCHARIDE EXPORT PROTEIN GFCE-RELATED"/>
    <property type="match status" value="1"/>
</dbReference>
<dbReference type="Pfam" id="PF02563">
    <property type="entry name" value="Poly_export"/>
    <property type="match status" value="1"/>
</dbReference>
<dbReference type="Pfam" id="PF22461">
    <property type="entry name" value="SLBB_2"/>
    <property type="match status" value="2"/>
</dbReference>
<accession>Q45407</accession>
<comment type="function">
    <text>Probably involved in polymerization and/or export of exopolysaccharide EPS I which functions as a virulence factor.</text>
</comment>
<comment type="subcellular location">
    <subcellularLocation>
        <location evidence="3">Cell outer membrane</location>
        <topology evidence="3">Multi-pass membrane protein</topology>
    </subcellularLocation>
</comment>
<comment type="similarity">
    <text evidence="3">Belongs to the BexD/CtrA/VexA family.</text>
</comment>
<gene>
    <name type="primary">epsA</name>
</gene>
<reference key="1">
    <citation type="journal article" date="1995" name="Mol. Microbiol.">
        <title>Molecular characterization of the eps gene cluster of Pseudomonas solanacearum and its transcriptional regulation at a single promoter.</title>
        <authorList>
            <person name="Huang J."/>
            <person name="Schell M."/>
        </authorList>
    </citation>
    <scope>NUCLEOTIDE SEQUENCE [GENOMIC DNA]</scope>
    <source>
        <strain>AW</strain>
    </source>
</reference>
<feature type="signal peptide" evidence="2">
    <location>
        <begin position="1"/>
        <end position="23"/>
    </location>
</feature>
<feature type="chain" id="PRO_0000025221" description="EPS I polysaccharide export outer membrane protein EpsA">
    <location>
        <begin position="24"/>
        <end position="377"/>
    </location>
</feature>
<feature type="lipid moiety-binding region" description="N-palmitoyl cysteine" evidence="1">
    <location>
        <position position="24"/>
    </location>
</feature>
<feature type="lipid moiety-binding region" description="S-diacylglycerol cysteine" evidence="1">
    <location>
        <position position="24"/>
    </location>
</feature>
<sequence length="377" mass="40446">MFVSIPSIRKTVMSLCAVPLMAACAFAPGMRFDPQRPLDPADNASVPKITQITPDLVRGGQAQVPRENVDVDQLLAKATPYRIGTGDILSIVVWDHPELVFPTQTYSIGSAYDIANFAGTPNVPGYVVSTGGDIQFPYAGVIKVAGRTQNEVRDEITRAIARVVKDPQVTVRVLAYRSQRIYVDGEVKTPGQQSIDDVPMTLVEALNRAGGINVTTGDNSRIRVTRGGKQWVLSMPALMHQGIDPASVLLRGGDIVRVEPREDSKVFVTGEVVRPSTVLPRNGKLTLSEALGEAGGVSPVSSDPRNVYVIRRAAEGEPQVYHLDAKSPVALALAEGFELRPKDVVYVDAGGLVRWSRVINLLVPTATPLIGAAAVAK</sequence>
<name>EPSA_RALSL</name>
<proteinExistence type="inferred from homology"/>
<evidence type="ECO:0000250" key="1"/>
<evidence type="ECO:0000255" key="2"/>
<evidence type="ECO:0000305" key="3"/>